<dbReference type="EMBL" id="L03426">
    <property type="protein sequence ID" value="AAA61303.1"/>
    <property type="molecule type" value="mRNA"/>
</dbReference>
<dbReference type="EMBL" id="L03426">
    <property type="protein sequence ID" value="AAA61304.1"/>
    <property type="molecule type" value="mRNA"/>
</dbReference>
<dbReference type="EMBL" id="M99578">
    <property type="protein sequence ID" value="AAA36187.1"/>
    <property type="status" value="ALT_FRAME"/>
    <property type="molecule type" value="mRNA"/>
</dbReference>
<dbReference type="EMBL" id="AL683807">
    <property type="status" value="NOT_ANNOTATED_CDS"/>
    <property type="molecule type" value="Genomic_DNA"/>
</dbReference>
<dbReference type="EMBL" id="BC028151">
    <property type="protein sequence ID" value="AAH28151.1"/>
    <property type="molecule type" value="mRNA"/>
</dbReference>
<dbReference type="EMBL" id="BC110496">
    <property type="protein sequence ID" value="AAI10497.1"/>
    <property type="molecule type" value="mRNA"/>
</dbReference>
<dbReference type="EMBL" id="BC110497">
    <property type="protein sequence ID" value="AAI10498.1"/>
    <property type="molecule type" value="mRNA"/>
</dbReference>
<dbReference type="CCDS" id="CCDS14116.1">
    <molecule id="Q02040-1"/>
</dbReference>
<dbReference type="PIR" id="A46419">
    <property type="entry name" value="A46419"/>
</dbReference>
<dbReference type="PIR" id="I54325">
    <property type="entry name" value="I54325"/>
</dbReference>
<dbReference type="RefSeq" id="NP_005079.2">
    <molecule id="Q02040-1"/>
    <property type="nucleotide sequence ID" value="NM_005088.2"/>
</dbReference>
<dbReference type="BioGRID" id="113860">
    <property type="interactions" value="112"/>
</dbReference>
<dbReference type="FunCoup" id="Q02040">
    <property type="interactions" value="2221"/>
</dbReference>
<dbReference type="IntAct" id="Q02040">
    <property type="interactions" value="72"/>
</dbReference>
<dbReference type="STRING" id="9606.ENSP00000324827"/>
<dbReference type="GlyGen" id="Q02040">
    <property type="glycosylation" value="4 sites, 2 N-linked glycans (2 sites), 1 O-linked glycan (2 sites)"/>
</dbReference>
<dbReference type="iPTMnet" id="Q02040"/>
<dbReference type="PhosphoSitePlus" id="Q02040"/>
<dbReference type="BioMuta" id="AKAP17A"/>
<dbReference type="DMDM" id="146291102"/>
<dbReference type="jPOST" id="Q02040"/>
<dbReference type="MassIVE" id="Q02040"/>
<dbReference type="PaxDb" id="9606-ENSP00000324827"/>
<dbReference type="PeptideAtlas" id="Q02040"/>
<dbReference type="ProteomicsDB" id="58030">
    <molecule id="Q02040-1"/>
</dbReference>
<dbReference type="ProteomicsDB" id="58031">
    <molecule id="Q02040-2"/>
</dbReference>
<dbReference type="ProteomicsDB" id="58032">
    <molecule id="Q02040-3"/>
</dbReference>
<dbReference type="Pumba" id="Q02040"/>
<dbReference type="Antibodypedia" id="23427">
    <property type="antibodies" value="220 antibodies from 30 providers"/>
</dbReference>
<dbReference type="DNASU" id="8227"/>
<dbReference type="Ensembl" id="ENST00000313871.9">
    <molecule id="Q02040-1"/>
    <property type="protein sequence ID" value="ENSP00000324827.3"/>
    <property type="gene ID" value="ENSG00000197976.12"/>
</dbReference>
<dbReference type="Ensembl" id="ENST00000474361.6">
    <molecule id="Q02040-2"/>
    <property type="protein sequence ID" value="ENSP00000435479.1"/>
    <property type="gene ID" value="ENSG00000197976.12"/>
</dbReference>
<dbReference type="Ensembl" id="ENST00000711132.1">
    <molecule id="Q02040-1"/>
    <property type="protein sequence ID" value="ENSP00000518597.1"/>
    <property type="gene ID" value="ENSG00000292343.1"/>
</dbReference>
<dbReference type="Ensembl" id="ENST00000711186.1">
    <molecule id="Q02040-2"/>
    <property type="protein sequence ID" value="ENSP00000518596.1"/>
    <property type="gene ID" value="ENSG00000292343.1"/>
</dbReference>
<dbReference type="GeneID" id="8227"/>
<dbReference type="KEGG" id="hsa:8227"/>
<dbReference type="MANE-Select" id="ENST00000313871.9">
    <property type="protein sequence ID" value="ENSP00000324827.3"/>
    <property type="RefSeq nucleotide sequence ID" value="NM_005088.3"/>
    <property type="RefSeq protein sequence ID" value="NP_005079.2"/>
</dbReference>
<dbReference type="UCSC" id="uc004cqa.4">
    <molecule id="Q02040-1"/>
    <property type="organism name" value="human"/>
</dbReference>
<dbReference type="AGR" id="HGNC:18783"/>
<dbReference type="CTD" id="8227"/>
<dbReference type="DisGeNET" id="8227"/>
<dbReference type="GeneCards" id="AKAP17A"/>
<dbReference type="HGNC" id="HGNC:18783">
    <property type="gene designation" value="AKAP17A"/>
</dbReference>
<dbReference type="HPA" id="ENSG00000197976">
    <property type="expression patterns" value="Low tissue specificity"/>
</dbReference>
<dbReference type="MIM" id="312095">
    <property type="type" value="gene"/>
</dbReference>
<dbReference type="MIM" id="465000">
    <property type="type" value="gene"/>
</dbReference>
<dbReference type="neXtProt" id="NX_Q02040"/>
<dbReference type="OpenTargets" id="ENSG00000197976"/>
<dbReference type="PharmGKB" id="PA162402969"/>
<dbReference type="VEuPathDB" id="HostDB:ENSG00000197976"/>
<dbReference type="eggNOG" id="KOG2891">
    <property type="taxonomic scope" value="Eukaryota"/>
</dbReference>
<dbReference type="GeneTree" id="ENSGT00440000039314"/>
<dbReference type="HOGENOM" id="CLU_011589_3_0_1"/>
<dbReference type="InParanoid" id="Q02040"/>
<dbReference type="OMA" id="IPACEQN"/>
<dbReference type="OrthoDB" id="1918237at2759"/>
<dbReference type="PAN-GO" id="Q02040">
    <property type="GO annotations" value="4 GO annotations based on evolutionary models"/>
</dbReference>
<dbReference type="PhylomeDB" id="Q02040"/>
<dbReference type="TreeFam" id="TF320443"/>
<dbReference type="PathwayCommons" id="Q02040"/>
<dbReference type="SignaLink" id="Q02040"/>
<dbReference type="BioGRID-ORCS" id="8227">
    <property type="hits" value="18 hits in 622 CRISPR screens"/>
</dbReference>
<dbReference type="CD-CODE" id="804901D1">
    <property type="entry name" value="Nuclear speckle"/>
</dbReference>
<dbReference type="ChiTaRS" id="AKAP17A">
    <property type="organism name" value="human"/>
</dbReference>
<dbReference type="GeneWiki" id="SFRS17A"/>
<dbReference type="GenomeRNAi" id="8227"/>
<dbReference type="Pharos" id="Q02040">
    <property type="development level" value="Tbio"/>
</dbReference>
<dbReference type="PRO" id="PR:Q02040"/>
<dbReference type="Proteomes" id="UP000005640">
    <property type="component" value="Chromosome X"/>
</dbReference>
<dbReference type="Proteomes" id="UP000005640">
    <property type="component" value="Chromosome Y"/>
</dbReference>
<dbReference type="RNAct" id="Q02040">
    <property type="molecule type" value="protein"/>
</dbReference>
<dbReference type="Bgee" id="ENSG00000197976">
    <property type="expression patterns" value="Expressed in tibia and 198 other cell types or tissues"/>
</dbReference>
<dbReference type="ExpressionAtlas" id="Q02040">
    <property type="expression patterns" value="baseline and differential"/>
</dbReference>
<dbReference type="GO" id="GO:0005829">
    <property type="term" value="C:cytosol"/>
    <property type="evidence" value="ECO:0000314"/>
    <property type="project" value="HPA"/>
</dbReference>
<dbReference type="GO" id="GO:0016607">
    <property type="term" value="C:nuclear speck"/>
    <property type="evidence" value="ECO:0000314"/>
    <property type="project" value="HPA"/>
</dbReference>
<dbReference type="GO" id="GO:0005634">
    <property type="term" value="C:nucleus"/>
    <property type="evidence" value="ECO:0000314"/>
    <property type="project" value="UniProtKB"/>
</dbReference>
<dbReference type="GO" id="GO:0005681">
    <property type="term" value="C:spliceosomal complex"/>
    <property type="evidence" value="ECO:0007669"/>
    <property type="project" value="UniProtKB-KW"/>
</dbReference>
<dbReference type="GO" id="GO:0051018">
    <property type="term" value="F:protein kinase A binding"/>
    <property type="evidence" value="ECO:0000314"/>
    <property type="project" value="UniProtKB"/>
</dbReference>
<dbReference type="GO" id="GO:0003723">
    <property type="term" value="F:RNA binding"/>
    <property type="evidence" value="ECO:0007005"/>
    <property type="project" value="UniProtKB"/>
</dbReference>
<dbReference type="GO" id="GO:0042113">
    <property type="term" value="P:B cell activation"/>
    <property type="evidence" value="ECO:0000303"/>
    <property type="project" value="UniProtKB"/>
</dbReference>
<dbReference type="GO" id="GO:0006397">
    <property type="term" value="P:mRNA processing"/>
    <property type="evidence" value="ECO:0007669"/>
    <property type="project" value="UniProtKB-KW"/>
</dbReference>
<dbReference type="GO" id="GO:0006355">
    <property type="term" value="P:regulation of DNA-templated transcription"/>
    <property type="evidence" value="ECO:0000303"/>
    <property type="project" value="UniProtKB"/>
</dbReference>
<dbReference type="GO" id="GO:0043484">
    <property type="term" value="P:regulation of RNA splicing"/>
    <property type="evidence" value="ECO:0000315"/>
    <property type="project" value="UniProtKB"/>
</dbReference>
<dbReference type="GO" id="GO:0008380">
    <property type="term" value="P:RNA splicing"/>
    <property type="evidence" value="ECO:0007669"/>
    <property type="project" value="UniProtKB-KW"/>
</dbReference>
<dbReference type="GO" id="GO:0007165">
    <property type="term" value="P:signal transduction"/>
    <property type="evidence" value="ECO:0000303"/>
    <property type="project" value="UniProtKB"/>
</dbReference>
<dbReference type="CDD" id="cd12264">
    <property type="entry name" value="RRM_AKAP17A"/>
    <property type="match status" value="1"/>
</dbReference>
<dbReference type="InterPro" id="IPR056852">
    <property type="entry name" value="AK17A/B"/>
</dbReference>
<dbReference type="InterPro" id="IPR035979">
    <property type="entry name" value="RBD_domain_sf"/>
</dbReference>
<dbReference type="PANTHER" id="PTHR12484:SF2">
    <property type="entry name" value="A-KINASE ANCHOR PROTEIN 17A"/>
    <property type="match status" value="1"/>
</dbReference>
<dbReference type="PANTHER" id="PTHR12484">
    <property type="entry name" value="B-LYMPHOCYTE ANTIGEN-RELATED"/>
    <property type="match status" value="1"/>
</dbReference>
<dbReference type="Pfam" id="PF25015">
    <property type="entry name" value="RBD_AKAP-17A"/>
    <property type="match status" value="1"/>
</dbReference>
<dbReference type="SUPFAM" id="SSF54928">
    <property type="entry name" value="RNA-binding domain, RBD"/>
    <property type="match status" value="1"/>
</dbReference>
<feature type="chain" id="PRO_0000022692" description="A-kinase anchor protein 17A">
    <location>
        <begin position="1"/>
        <end position="695"/>
    </location>
</feature>
<feature type="domain" description="RRM">
    <location>
        <begin position="147"/>
        <end position="256"/>
    </location>
</feature>
<feature type="region of interest" description="PKA-RI and PKA-RII subunit binding domain">
    <location>
        <begin position="83"/>
        <end position="112"/>
    </location>
</feature>
<feature type="region of interest" description="Disordered" evidence="1">
    <location>
        <begin position="279"/>
        <end position="337"/>
    </location>
</feature>
<feature type="region of interest" description="PKA-RI-alpha subunit binding domain">
    <location>
        <begin position="425"/>
        <end position="454"/>
    </location>
</feature>
<feature type="region of interest" description="Disordered" evidence="1">
    <location>
        <begin position="482"/>
        <end position="695"/>
    </location>
</feature>
<feature type="compositionally biased region" description="Basic and acidic residues" evidence="1">
    <location>
        <begin position="567"/>
        <end position="585"/>
    </location>
</feature>
<feature type="compositionally biased region" description="Basic residues" evidence="1">
    <location>
        <begin position="598"/>
        <end position="609"/>
    </location>
</feature>
<feature type="compositionally biased region" description="Basic residues" evidence="1">
    <location>
        <begin position="618"/>
        <end position="628"/>
    </location>
</feature>
<feature type="compositionally biased region" description="Basic and acidic residues" evidence="1">
    <location>
        <begin position="629"/>
        <end position="644"/>
    </location>
</feature>
<feature type="compositionally biased region" description="Basic residues" evidence="1">
    <location>
        <begin position="645"/>
        <end position="658"/>
    </location>
</feature>
<feature type="compositionally biased region" description="Basic residues" evidence="1">
    <location>
        <begin position="666"/>
        <end position="695"/>
    </location>
</feature>
<feature type="modified residue" description="Phosphoserine" evidence="9 10 11 12">
    <location>
        <position position="537"/>
    </location>
</feature>
<feature type="modified residue" description="Phosphoserine" evidence="10">
    <location>
        <position position="633"/>
    </location>
</feature>
<feature type="cross-link" description="Glycyl lysine isopeptide (Lys-Gly) (interchain with G-Cter in SUMO1); alternate" evidence="13">
    <location>
        <position position="118"/>
    </location>
</feature>
<feature type="cross-link" description="Glycyl lysine isopeptide (Lys-Gly) (interchain with G-Cter in SUMO2); alternate" evidence="14">
    <location>
        <position position="118"/>
    </location>
</feature>
<feature type="splice variant" id="VSP_024947" description="In isoform 3." evidence="6">
    <original>AVKLREQEQKEEKLRLQQQEERRRLQEAELRRVEEEKERALGLQRKERELRERLLSILLSK</original>
    <variation>VGGSLCSRQPRPGCPQCPPLKCGRRHGAVSPPAAAVATKPALMPRMTAPSREGVALVCRSR</variation>
    <location>
        <begin position="385"/>
        <end position="445"/>
    </location>
</feature>
<feature type="splice variant" id="VSP_004490" description="In isoform 2." evidence="7">
    <original>A</original>
    <variation>L</variation>
    <location>
        <position position="385"/>
    </location>
</feature>
<feature type="splice variant" id="VSP_004491" description="In isoform 2." evidence="7">
    <location>
        <begin position="386"/>
        <end position="695"/>
    </location>
</feature>
<feature type="splice variant" id="VSP_024948" description="In isoform 3." evidence="6">
    <location>
        <begin position="446"/>
        <end position="695"/>
    </location>
</feature>
<feature type="sequence variant" id="VAR_055353" description="In dbSNP:rs17852504." evidence="3">
    <original>P</original>
    <variation>S</variation>
    <location>
        <position position="194"/>
    </location>
</feature>
<feature type="mutagenesis site" description="Abolishes binding to PKA-RI; when associated with 445-P-P-446." evidence="5">
    <original>LL</original>
    <variation>PP</variation>
    <location>
        <begin position="438"/>
        <end position="439"/>
    </location>
</feature>
<feature type="mutagenesis site" description="Abolishes binding to PKA-RI; when associated with 438-P-P-439." evidence="5">
    <original>KK</original>
    <variation>PP</variation>
    <location>
        <begin position="445"/>
        <end position="446"/>
    </location>
</feature>
<feature type="sequence conflict" description="In Ref. 2; AAA36187." evidence="7" ref="2">
    <original>L</original>
    <variation>Q</variation>
    <location>
        <position position="443"/>
    </location>
</feature>
<feature type="sequence conflict" description="In Ref. 1; AAA61303 and 4; AAI10497." evidence="7" ref="1 4">
    <original>P</original>
    <variation>A</variation>
    <location>
        <position position="500"/>
    </location>
</feature>
<feature type="sequence conflict" description="In Ref. 2; AAA36187." evidence="7" ref="2">
    <original>H</original>
    <variation>P</variation>
    <location>
        <position position="502"/>
    </location>
</feature>
<organism>
    <name type="scientific">Homo sapiens</name>
    <name type="common">Human</name>
    <dbReference type="NCBI Taxonomy" id="9606"/>
    <lineage>
        <taxon>Eukaryota</taxon>
        <taxon>Metazoa</taxon>
        <taxon>Chordata</taxon>
        <taxon>Craniata</taxon>
        <taxon>Vertebrata</taxon>
        <taxon>Euteleostomi</taxon>
        <taxon>Mammalia</taxon>
        <taxon>Eutheria</taxon>
        <taxon>Euarchontoglires</taxon>
        <taxon>Primates</taxon>
        <taxon>Haplorrhini</taxon>
        <taxon>Catarrhini</taxon>
        <taxon>Hominidae</taxon>
        <taxon>Homo</taxon>
    </lineage>
</organism>
<keyword id="KW-0025">Alternative splicing</keyword>
<keyword id="KW-1017">Isopeptide bond</keyword>
<keyword id="KW-0507">mRNA processing</keyword>
<keyword id="KW-0508">mRNA splicing</keyword>
<keyword id="KW-0539">Nucleus</keyword>
<keyword id="KW-0597">Phosphoprotein</keyword>
<keyword id="KW-1267">Proteomics identification</keyword>
<keyword id="KW-1185">Reference proteome</keyword>
<keyword id="KW-0694">RNA-binding</keyword>
<keyword id="KW-0747">Spliceosome</keyword>
<keyword id="KW-0832">Ubl conjugation</keyword>
<comment type="function">
    <text evidence="4 5">Splice factor regulating alternative splice site selection for certain mRNA precursors. Mediates regulation of pre-mRNA splicing in a PKA-dependent manner.</text>
</comment>
<comment type="subunit">
    <text evidence="2 4 5">Monomer. Component of the spliceosome. Interacts with ZRANB2 and SFRS1/ASF through its Arg/Ser-rich domain. Interacts with RI and RII subunits of PKA.</text>
</comment>
<comment type="interaction">
    <interactant intactId="EBI-1042725">
        <id>Q02040</id>
    </interactant>
    <interactant intactId="EBI-12170453">
        <id>Q8N2N9-4</id>
        <label>ANKRD36B</label>
    </interactant>
    <organismsDiffer>false</organismsDiffer>
    <experiments>3</experiments>
</comment>
<comment type="interaction">
    <interactant intactId="EBI-1042725">
        <id>Q02040</id>
    </interactant>
    <interactant intactId="EBI-739624">
        <id>Q8NHQ1</id>
        <label>CEP70</label>
    </interactant>
    <organismsDiffer>false</organismsDiffer>
    <experiments>7</experiments>
</comment>
<comment type="interaction">
    <interactant intactId="EBI-1042725">
        <id>Q02040</id>
    </interactant>
    <interactant intactId="EBI-739789">
        <id>Q92997</id>
        <label>DVL3</label>
    </interactant>
    <organismsDiffer>false</organismsDiffer>
    <experiments>3</experiments>
</comment>
<comment type="interaction">
    <interactant intactId="EBI-1042725">
        <id>Q02040</id>
    </interactant>
    <interactant intactId="EBI-7261162">
        <id>Q9UGU5</id>
        <label>HMGXB4</label>
    </interactant>
    <organismsDiffer>false</organismsDiffer>
    <experiments>3</experiments>
</comment>
<comment type="interaction">
    <interactant intactId="EBI-1042725">
        <id>Q02040</id>
    </interactant>
    <interactant intactId="EBI-2340927">
        <id>P78317</id>
        <label>RNF4</label>
    </interactant>
    <organismsDiffer>false</organismsDiffer>
    <experiments>5</experiments>
</comment>
<comment type="interaction">
    <interactant intactId="EBI-1042725">
        <id>Q02040</id>
    </interactant>
    <interactant intactId="EBI-742426">
        <id>Q9H190</id>
        <label>SDCBP2</label>
    </interactant>
    <organismsDiffer>false</organismsDiffer>
    <experiments>3</experiments>
</comment>
<comment type="interaction">
    <interactant intactId="EBI-1042725">
        <id>Q02040</id>
    </interactant>
    <interactant intactId="EBI-3867173">
        <id>A7MD48</id>
        <label>SRRM4</label>
    </interactant>
    <organismsDiffer>false</organismsDiffer>
    <experiments>3</experiments>
</comment>
<comment type="interaction">
    <interactant intactId="EBI-1042725">
        <id>Q02040</id>
    </interactant>
    <interactant intactId="EBI-741515">
        <id>Q9NVV9</id>
        <label>THAP1</label>
    </interactant>
    <organismsDiffer>false</organismsDiffer>
    <experiments>5</experiments>
</comment>
<comment type="interaction">
    <interactant intactId="EBI-1042725">
        <id>Q02040</id>
    </interactant>
    <interactant intactId="EBI-10180829">
        <id>Q7KZS0</id>
        <label>UBE2I</label>
    </interactant>
    <organismsDiffer>false</organismsDiffer>
    <experiments>3</experiments>
</comment>
<comment type="interaction">
    <interactant intactId="EBI-1042725">
        <id>Q02040</id>
    </interactant>
    <interactant intactId="EBI-1051583">
        <id>O95218</id>
        <label>ZRANB2</label>
    </interactant>
    <organismsDiffer>false</organismsDiffer>
    <experiments>5</experiments>
</comment>
<comment type="interaction">
    <interactant intactId="EBI-10222656">
        <id>Q02040-3</id>
    </interactant>
    <interactant intactId="EBI-739580">
        <id>Q13137</id>
        <label>CALCOCO2</label>
    </interactant>
    <organismsDiffer>false</organismsDiffer>
    <experiments>3</experiments>
</comment>
<comment type="interaction">
    <interactant intactId="EBI-10222656">
        <id>Q02040-3</id>
    </interactant>
    <interactant intactId="EBI-739624">
        <id>Q8NHQ1</id>
        <label>CEP70</label>
    </interactant>
    <organismsDiffer>false</organismsDiffer>
    <experiments>3</experiments>
</comment>
<comment type="interaction">
    <interactant intactId="EBI-10222656">
        <id>Q02040-3</id>
    </interactant>
    <interactant intactId="EBI-10171697">
        <id>Q6A162</id>
        <label>KRT40</label>
    </interactant>
    <organismsDiffer>false</organismsDiffer>
    <experiments>3</experiments>
</comment>
<comment type="interaction">
    <interactant intactId="EBI-10222656">
        <id>Q02040-3</id>
    </interactant>
    <interactant intactId="EBI-724076">
        <id>Q99750</id>
        <label>MDFI</label>
    </interactant>
    <organismsDiffer>false</organismsDiffer>
    <experiments>3</experiments>
</comment>
<comment type="interaction">
    <interactant intactId="EBI-10222656">
        <id>Q02040-3</id>
    </interactant>
    <interactant intactId="EBI-741515">
        <id>Q9NVV9</id>
        <label>THAP1</label>
    </interactant>
    <organismsDiffer>false</organismsDiffer>
    <experiments>3</experiments>
</comment>
<comment type="interaction">
    <interactant intactId="EBI-10222656">
        <id>Q02040-3</id>
    </interactant>
    <interactant intactId="EBI-359224">
        <id>Q13077</id>
        <label>TRAF1</label>
    </interactant>
    <organismsDiffer>false</organismsDiffer>
    <experiments>3</experiments>
</comment>
<comment type="subcellular location">
    <subcellularLocation>
        <location evidence="4 5">Nucleus speckle</location>
    </subcellularLocation>
</comment>
<comment type="alternative products">
    <event type="alternative splicing"/>
    <isoform>
        <id>Q02040-1</id>
        <name>1</name>
        <sequence type="displayed"/>
    </isoform>
    <isoform>
        <id>Q02040-2</id>
        <name>2</name>
        <sequence type="described" ref="VSP_004490 VSP_004491"/>
    </isoform>
    <isoform>
        <id>Q02040-3</id>
        <name>3</name>
        <sequence type="described" ref="VSP_024947 VSP_024948"/>
    </isoform>
</comment>
<comment type="tissue specificity">
    <text evidence="5">Widely expressed. Found in heart, brain, lung, liver, skeletal muscle, kidney and pancreas. Expressed in activated B-cells and placenta. Expressed in all cell lines tested including Jurkat-TAg, U-937 and HEK293 cells.</text>
</comment>
<comment type="domain">
    <text evidence="5">RI-alpha binding site, predicted to form an amphipathic helix, could participate in protein-protein interactions with a complementary surface on the R-subunit dimer.</text>
</comment>
<comment type="miscellaneous">
    <text>The gene coding for this protein is located in the pseudoautosomal region 1 (PAR1) of X and Y chromosomes.</text>
</comment>
<comment type="miscellaneous">
    <molecule>Isoform 2</molecule>
    <text evidence="7">May be produced at very low levels due to a premature stop codon in the mRNA, leading to nonsense-mediated mRNA decay.</text>
</comment>
<comment type="caution">
    <text evidence="8">Was originally thought to be a cell surface protein involved in B-cell activation.</text>
</comment>
<comment type="sequence caution" evidence="7">
    <conflict type="frameshift">
        <sequence resource="EMBL-CDS" id="AAA36187"/>
    </conflict>
</comment>
<protein>
    <recommendedName>
        <fullName>A-kinase anchor protein 17A</fullName>
        <shortName>AKAP-17A</shortName>
    </recommendedName>
    <alternativeName>
        <fullName>721P</fullName>
    </alternativeName>
    <alternativeName>
        <fullName>B-lymphocyte antigen</fullName>
    </alternativeName>
    <alternativeName>
        <fullName>Protein XE7</fullName>
    </alternativeName>
    <alternativeName>
        <fullName>Protein kinase A-anchoring protein 17A</fullName>
        <shortName>PRKA17A</shortName>
    </alternativeName>
    <alternativeName>
        <fullName>Splicing factor, arginine/serine-rich 17A</fullName>
    </alternativeName>
</protein>
<gene>
    <name type="primary">AKAP17A</name>
    <name type="synonym">CXYorf3</name>
    <name type="synonym">DXYS155E</name>
    <name type="synonym">SFRS17A</name>
    <name type="synonym">XE7</name>
</gene>
<proteinExistence type="evidence at protein level"/>
<reference key="1">
    <citation type="journal article" date="1992" name="Hum. Mol. Genet.">
        <title>Structure and expression of the human pseudoautosomal gene XE7.</title>
        <authorList>
            <person name="Ellison J.W."/>
            <person name="Ramos C."/>
            <person name="Yen P.H."/>
            <person name="Shapiro L.J."/>
        </authorList>
    </citation>
    <scope>NUCLEOTIDE SEQUENCE [MRNA] (ISOFORM 1)</scope>
</reference>
<reference key="2">
    <citation type="journal article" date="1992" name="Proc. Natl. Acad. Sci. U.S.A.">
        <title>Cloning and sequencing of a trophoblast-endothelial-activated lymphocyte surface protein: cDNA sequence and genomic structure.</title>
        <authorList>
            <person name="Voland J.R."/>
            <person name="Wyzykowski R.J."/>
            <person name="Huang M."/>
            <person name="Dutton R.W."/>
        </authorList>
    </citation>
    <scope>NUCLEOTIDE SEQUENCE [MRNA] (ISOFORM 1)</scope>
    <source>
        <tissue>Placenta</tissue>
    </source>
</reference>
<reference key="3">
    <citation type="journal article" date="2005" name="Nature">
        <title>The DNA sequence of the human X chromosome.</title>
        <authorList>
            <person name="Ross M.T."/>
            <person name="Grafham D.V."/>
            <person name="Coffey A.J."/>
            <person name="Scherer S."/>
            <person name="McLay K."/>
            <person name="Muzny D."/>
            <person name="Platzer M."/>
            <person name="Howell G.R."/>
            <person name="Burrows C."/>
            <person name="Bird C.P."/>
            <person name="Frankish A."/>
            <person name="Lovell F.L."/>
            <person name="Howe K.L."/>
            <person name="Ashurst J.L."/>
            <person name="Fulton R.S."/>
            <person name="Sudbrak R."/>
            <person name="Wen G."/>
            <person name="Jones M.C."/>
            <person name="Hurles M.E."/>
            <person name="Andrews T.D."/>
            <person name="Scott C.E."/>
            <person name="Searle S."/>
            <person name="Ramser J."/>
            <person name="Whittaker A."/>
            <person name="Deadman R."/>
            <person name="Carter N.P."/>
            <person name="Hunt S.E."/>
            <person name="Chen R."/>
            <person name="Cree A."/>
            <person name="Gunaratne P."/>
            <person name="Havlak P."/>
            <person name="Hodgson A."/>
            <person name="Metzker M.L."/>
            <person name="Richards S."/>
            <person name="Scott G."/>
            <person name="Steffen D."/>
            <person name="Sodergren E."/>
            <person name="Wheeler D.A."/>
            <person name="Worley K.C."/>
            <person name="Ainscough R."/>
            <person name="Ambrose K.D."/>
            <person name="Ansari-Lari M.A."/>
            <person name="Aradhya S."/>
            <person name="Ashwell R.I."/>
            <person name="Babbage A.K."/>
            <person name="Bagguley C.L."/>
            <person name="Ballabio A."/>
            <person name="Banerjee R."/>
            <person name="Barker G.E."/>
            <person name="Barlow K.F."/>
            <person name="Barrett I.P."/>
            <person name="Bates K.N."/>
            <person name="Beare D.M."/>
            <person name="Beasley H."/>
            <person name="Beasley O."/>
            <person name="Beck A."/>
            <person name="Bethel G."/>
            <person name="Blechschmidt K."/>
            <person name="Brady N."/>
            <person name="Bray-Allen S."/>
            <person name="Bridgeman A.M."/>
            <person name="Brown A.J."/>
            <person name="Brown M.J."/>
            <person name="Bonnin D."/>
            <person name="Bruford E.A."/>
            <person name="Buhay C."/>
            <person name="Burch P."/>
            <person name="Burford D."/>
            <person name="Burgess J."/>
            <person name="Burrill W."/>
            <person name="Burton J."/>
            <person name="Bye J.M."/>
            <person name="Carder C."/>
            <person name="Carrel L."/>
            <person name="Chako J."/>
            <person name="Chapman J.C."/>
            <person name="Chavez D."/>
            <person name="Chen E."/>
            <person name="Chen G."/>
            <person name="Chen Y."/>
            <person name="Chen Z."/>
            <person name="Chinault C."/>
            <person name="Ciccodicola A."/>
            <person name="Clark S.Y."/>
            <person name="Clarke G."/>
            <person name="Clee C.M."/>
            <person name="Clegg S."/>
            <person name="Clerc-Blankenburg K."/>
            <person name="Clifford K."/>
            <person name="Cobley V."/>
            <person name="Cole C.G."/>
            <person name="Conquer J.S."/>
            <person name="Corby N."/>
            <person name="Connor R.E."/>
            <person name="David R."/>
            <person name="Davies J."/>
            <person name="Davis C."/>
            <person name="Davis J."/>
            <person name="Delgado O."/>
            <person name="Deshazo D."/>
            <person name="Dhami P."/>
            <person name="Ding Y."/>
            <person name="Dinh H."/>
            <person name="Dodsworth S."/>
            <person name="Draper H."/>
            <person name="Dugan-Rocha S."/>
            <person name="Dunham A."/>
            <person name="Dunn M."/>
            <person name="Durbin K.J."/>
            <person name="Dutta I."/>
            <person name="Eades T."/>
            <person name="Ellwood M."/>
            <person name="Emery-Cohen A."/>
            <person name="Errington H."/>
            <person name="Evans K.L."/>
            <person name="Faulkner L."/>
            <person name="Francis F."/>
            <person name="Frankland J."/>
            <person name="Fraser A.E."/>
            <person name="Galgoczy P."/>
            <person name="Gilbert J."/>
            <person name="Gill R."/>
            <person name="Gloeckner G."/>
            <person name="Gregory S.G."/>
            <person name="Gribble S."/>
            <person name="Griffiths C."/>
            <person name="Grocock R."/>
            <person name="Gu Y."/>
            <person name="Gwilliam R."/>
            <person name="Hamilton C."/>
            <person name="Hart E.A."/>
            <person name="Hawes A."/>
            <person name="Heath P.D."/>
            <person name="Heitmann K."/>
            <person name="Hennig S."/>
            <person name="Hernandez J."/>
            <person name="Hinzmann B."/>
            <person name="Ho S."/>
            <person name="Hoffs M."/>
            <person name="Howden P.J."/>
            <person name="Huckle E.J."/>
            <person name="Hume J."/>
            <person name="Hunt P.J."/>
            <person name="Hunt A.R."/>
            <person name="Isherwood J."/>
            <person name="Jacob L."/>
            <person name="Johnson D."/>
            <person name="Jones S."/>
            <person name="de Jong P.J."/>
            <person name="Joseph S.S."/>
            <person name="Keenan S."/>
            <person name="Kelly S."/>
            <person name="Kershaw J.K."/>
            <person name="Khan Z."/>
            <person name="Kioschis P."/>
            <person name="Klages S."/>
            <person name="Knights A.J."/>
            <person name="Kosiura A."/>
            <person name="Kovar-Smith C."/>
            <person name="Laird G.K."/>
            <person name="Langford C."/>
            <person name="Lawlor S."/>
            <person name="Leversha M."/>
            <person name="Lewis L."/>
            <person name="Liu W."/>
            <person name="Lloyd C."/>
            <person name="Lloyd D.M."/>
            <person name="Loulseged H."/>
            <person name="Loveland J.E."/>
            <person name="Lovell J.D."/>
            <person name="Lozado R."/>
            <person name="Lu J."/>
            <person name="Lyne R."/>
            <person name="Ma J."/>
            <person name="Maheshwari M."/>
            <person name="Matthews L.H."/>
            <person name="McDowall J."/>
            <person name="McLaren S."/>
            <person name="McMurray A."/>
            <person name="Meidl P."/>
            <person name="Meitinger T."/>
            <person name="Milne S."/>
            <person name="Miner G."/>
            <person name="Mistry S.L."/>
            <person name="Morgan M."/>
            <person name="Morris S."/>
            <person name="Mueller I."/>
            <person name="Mullikin J.C."/>
            <person name="Nguyen N."/>
            <person name="Nordsiek G."/>
            <person name="Nyakatura G."/>
            <person name="O'dell C.N."/>
            <person name="Okwuonu G."/>
            <person name="Palmer S."/>
            <person name="Pandian R."/>
            <person name="Parker D."/>
            <person name="Parrish J."/>
            <person name="Pasternak S."/>
            <person name="Patel D."/>
            <person name="Pearce A.V."/>
            <person name="Pearson D.M."/>
            <person name="Pelan S.E."/>
            <person name="Perez L."/>
            <person name="Porter K.M."/>
            <person name="Ramsey Y."/>
            <person name="Reichwald K."/>
            <person name="Rhodes S."/>
            <person name="Ridler K.A."/>
            <person name="Schlessinger D."/>
            <person name="Schueler M.G."/>
            <person name="Sehra H.K."/>
            <person name="Shaw-Smith C."/>
            <person name="Shen H."/>
            <person name="Sheridan E.M."/>
            <person name="Shownkeen R."/>
            <person name="Skuce C.D."/>
            <person name="Smith M.L."/>
            <person name="Sotheran E.C."/>
            <person name="Steingruber H.E."/>
            <person name="Steward C.A."/>
            <person name="Storey R."/>
            <person name="Swann R.M."/>
            <person name="Swarbreck D."/>
            <person name="Tabor P.E."/>
            <person name="Taudien S."/>
            <person name="Taylor T."/>
            <person name="Teague B."/>
            <person name="Thomas K."/>
            <person name="Thorpe A."/>
            <person name="Timms K."/>
            <person name="Tracey A."/>
            <person name="Trevanion S."/>
            <person name="Tromans A.C."/>
            <person name="d'Urso M."/>
            <person name="Verduzco D."/>
            <person name="Villasana D."/>
            <person name="Waldron L."/>
            <person name="Wall M."/>
            <person name="Wang Q."/>
            <person name="Warren J."/>
            <person name="Warry G.L."/>
            <person name="Wei X."/>
            <person name="West A."/>
            <person name="Whitehead S.L."/>
            <person name="Whiteley M.N."/>
            <person name="Wilkinson J.E."/>
            <person name="Willey D.L."/>
            <person name="Williams G."/>
            <person name="Williams L."/>
            <person name="Williamson A."/>
            <person name="Williamson H."/>
            <person name="Wilming L."/>
            <person name="Woodmansey R.L."/>
            <person name="Wray P.W."/>
            <person name="Yen J."/>
            <person name="Zhang J."/>
            <person name="Zhou J."/>
            <person name="Zoghbi H."/>
            <person name="Zorilla S."/>
            <person name="Buck D."/>
            <person name="Reinhardt R."/>
            <person name="Poustka A."/>
            <person name="Rosenthal A."/>
            <person name="Lehrach H."/>
            <person name="Meindl A."/>
            <person name="Minx P.J."/>
            <person name="Hillier L.W."/>
            <person name="Willard H.F."/>
            <person name="Wilson R.K."/>
            <person name="Waterston R.H."/>
            <person name="Rice C.M."/>
            <person name="Vaudin M."/>
            <person name="Coulson A."/>
            <person name="Nelson D.L."/>
            <person name="Weinstock G."/>
            <person name="Sulston J.E."/>
            <person name="Durbin R.M."/>
            <person name="Hubbard T."/>
            <person name="Gibbs R.A."/>
            <person name="Beck S."/>
            <person name="Rogers J."/>
            <person name="Bentley D.R."/>
        </authorList>
    </citation>
    <scope>NUCLEOTIDE SEQUENCE [LARGE SCALE GENOMIC DNA]</scope>
</reference>
<reference key="4">
    <citation type="journal article" date="2004" name="Genome Res.">
        <title>The status, quality, and expansion of the NIH full-length cDNA project: the Mammalian Gene Collection (MGC).</title>
        <authorList>
            <consortium name="The MGC Project Team"/>
        </authorList>
    </citation>
    <scope>NUCLEOTIDE SEQUENCE [LARGE SCALE MRNA] (ISOFORMS 1 AND 3)</scope>
    <scope>VARIANT SER-194</scope>
    <source>
        <tissue>Blood</tissue>
    </source>
</reference>
<reference key="5">
    <citation type="journal article" date="2002" name="Genome Res.">
        <title>Large-scale proteomic analysis of the human spliceosome.</title>
        <authorList>
            <person name="Rappsilber J."/>
            <person name="Ryder U."/>
            <person name="Lamond A.I."/>
            <person name="Mann M."/>
        </authorList>
    </citation>
    <scope>IDENTIFICATION IN A COMPLEX WITH THE SPLICEOSOME</scope>
    <scope>IDENTIFICATION BY MASS SPECTROMETRY</scope>
</reference>
<reference key="6">
    <citation type="journal article" date="2004" name="Genome Biol.">
        <title>An unappreciated role for RNA surveillance.</title>
        <authorList>
            <person name="Hillman R.T."/>
            <person name="Green R.E."/>
            <person name="Brenner S.E."/>
        </authorList>
    </citation>
    <scope>SPLICE ISOFORM(S) THAT ARE POTENTIAL NMD TARGET(S)</scope>
</reference>
<reference key="7">
    <citation type="journal article" date="2006" name="Cell">
        <title>Global, in vivo, and site-specific phosphorylation dynamics in signaling networks.</title>
        <authorList>
            <person name="Olsen J.V."/>
            <person name="Blagoev B."/>
            <person name="Gnad F."/>
            <person name="Macek B."/>
            <person name="Kumar C."/>
            <person name="Mortensen P."/>
            <person name="Mann M."/>
        </authorList>
    </citation>
    <scope>PHOSPHORYLATION [LARGE SCALE ANALYSIS] AT SER-537</scope>
    <scope>IDENTIFICATION BY MASS SPECTROMETRY [LARGE SCALE ANALYSIS]</scope>
    <source>
        <tissue>Cervix carcinoma</tissue>
    </source>
</reference>
<reference key="8">
    <citation type="journal article" date="2006" name="Nucleic Acids Res.">
        <title>XE7: a novel splicing factor that interacts with ASF/SF2 and ZNF265.</title>
        <authorList>
            <person name="Mangs A.H."/>
            <person name="Speirs H.J.L."/>
            <person name="Goy C."/>
            <person name="Adams D.J."/>
            <person name="Markus M.A."/>
            <person name="Morris B.J."/>
        </authorList>
    </citation>
    <scope>FUNCTION</scope>
    <scope>SUBCELLULAR LOCATION</scope>
    <scope>INTERACTION WITH ZRANB2 AND SFRS1</scope>
</reference>
<reference key="9">
    <citation type="journal article" date="2008" name="Proc. Natl. Acad. Sci. U.S.A.">
        <title>A quantitative atlas of mitotic phosphorylation.</title>
        <authorList>
            <person name="Dephoure N."/>
            <person name="Zhou C."/>
            <person name="Villen J."/>
            <person name="Beausoleil S.A."/>
            <person name="Bakalarski C.E."/>
            <person name="Elledge S.J."/>
            <person name="Gygi S.P."/>
        </authorList>
    </citation>
    <scope>IDENTIFICATION BY MASS SPECTROMETRY [LARGE SCALE ANALYSIS]</scope>
    <source>
        <tissue>Cervix carcinoma</tissue>
    </source>
</reference>
<reference key="10">
    <citation type="journal article" date="2009" name="J. Biol. Chem.">
        <title>Splicing factor arginine/serine-rich 17A (SFRS17A) is an A-kinase anchoring protein that targets protein kinase A to splicing factor compartments.</title>
        <authorList>
            <person name="Jarnaess E."/>
            <person name="Stokka A.J."/>
            <person name="Kvissel A.K."/>
            <person name="Skalhegg B.S."/>
            <person name="Torgersen K.M."/>
            <person name="Scott J.D."/>
            <person name="Carlson C.R."/>
            <person name="Tasken K."/>
        </authorList>
    </citation>
    <scope>FUNCTION</scope>
    <scope>SUBUNIT</scope>
    <scope>SUBCELLULAR LOCATION</scope>
    <scope>TISSUE SPECIFICITY</scope>
    <scope>DOMAIN</scope>
    <scope>MUTAGENESIS OF 438-LEU-LEU-439 AND 445-LYS-LYS-446</scope>
</reference>
<reference key="11">
    <citation type="journal article" date="2011" name="Sci. Signal.">
        <title>System-wide temporal characterization of the proteome and phosphoproteome of human embryonic stem cell differentiation.</title>
        <authorList>
            <person name="Rigbolt K.T."/>
            <person name="Prokhorova T.A."/>
            <person name="Akimov V."/>
            <person name="Henningsen J."/>
            <person name="Johansen P.T."/>
            <person name="Kratchmarova I."/>
            <person name="Kassem M."/>
            <person name="Mann M."/>
            <person name="Olsen J.V."/>
            <person name="Blagoev B."/>
        </authorList>
    </citation>
    <scope>PHOSPHORYLATION [LARGE SCALE ANALYSIS] AT SER-537 AND SER-633</scope>
    <scope>IDENTIFICATION BY MASS SPECTROMETRY [LARGE SCALE ANALYSIS]</scope>
</reference>
<reference key="12">
    <citation type="journal article" date="2013" name="J. Proteome Res.">
        <title>Toward a comprehensive characterization of a human cancer cell phosphoproteome.</title>
        <authorList>
            <person name="Zhou H."/>
            <person name="Di Palma S."/>
            <person name="Preisinger C."/>
            <person name="Peng M."/>
            <person name="Polat A.N."/>
            <person name="Heck A.J."/>
            <person name="Mohammed S."/>
        </authorList>
    </citation>
    <scope>PHOSPHORYLATION [LARGE SCALE ANALYSIS] AT SER-537</scope>
    <scope>IDENTIFICATION BY MASS SPECTROMETRY [LARGE SCALE ANALYSIS]</scope>
    <source>
        <tissue>Cervix carcinoma</tissue>
        <tissue>Erythroleukemia</tissue>
    </source>
</reference>
<reference key="13">
    <citation type="journal article" date="2014" name="J. Proteomics">
        <title>An enzyme assisted RP-RPLC approach for in-depth analysis of human liver phosphoproteome.</title>
        <authorList>
            <person name="Bian Y."/>
            <person name="Song C."/>
            <person name="Cheng K."/>
            <person name="Dong M."/>
            <person name="Wang F."/>
            <person name="Huang J."/>
            <person name="Sun D."/>
            <person name="Wang L."/>
            <person name="Ye M."/>
            <person name="Zou H."/>
        </authorList>
    </citation>
    <scope>PHOSPHORYLATION [LARGE SCALE ANALYSIS] AT SER-537</scope>
    <scope>IDENTIFICATION BY MASS SPECTROMETRY [LARGE SCALE ANALYSIS]</scope>
    <source>
        <tissue>Liver</tissue>
    </source>
</reference>
<reference key="14">
    <citation type="journal article" date="2014" name="Proc. Natl. Acad. Sci. U.S.A.">
        <title>Mapping of SUMO sites and analysis of SUMOylation changes induced by external stimuli.</title>
        <authorList>
            <person name="Impens F."/>
            <person name="Radoshevich L."/>
            <person name="Cossart P."/>
            <person name="Ribet D."/>
        </authorList>
    </citation>
    <scope>SUMOYLATION [LARGE SCALE ANALYSIS] AT LYS-118</scope>
    <scope>IDENTIFICATION BY MASS SPECTROMETRY [LARGE SCALE ANALYSIS]</scope>
</reference>
<reference key="15">
    <citation type="journal article" date="2017" name="Nat. Struct. Mol. Biol.">
        <title>Site-specific mapping of the human SUMO proteome reveals co-modification with phosphorylation.</title>
        <authorList>
            <person name="Hendriks I.A."/>
            <person name="Lyon D."/>
            <person name="Young C."/>
            <person name="Jensen L.J."/>
            <person name="Vertegaal A.C."/>
            <person name="Nielsen M.L."/>
        </authorList>
    </citation>
    <scope>SUMOYLATION [LARGE SCALE ANALYSIS] AT LYS-118</scope>
    <scope>IDENTIFICATION BY MASS SPECTROMETRY [LARGE SCALE ANALYSIS]</scope>
</reference>
<name>AK17A_HUMAN</name>
<sequence>MAAATIVHDTSEAVELCPAYGLYLKPITKMTISVALPQLKQPGKSISNWEVMERLKGMVQNHQFSTLRISKSTMDFIRFEGEVENKSLVKSFLACLDGKTIKLSGFSDILKVRAAEFKIDFPTRHDWDSFFRDAKDMNETLPGERPDTIHLEGLPCKWFALKESGSEKPSEDVLVKVFEKFGEIRNVDIPMLDPYREEMTGRNFHTFSFGGHLNFEAYVQYREYMGFIQAMSALRGMKLMYKGEDGKAVACNIKVSFDSTKHLSDASIKKRQLERQKLQELEQQREEQKRREKEAEERQRAEERKQKELEELERERKREEKLRKREQKQRDRELRRNQKKLEKLQAEEQKQLQEKIKLEERKLLLAQRNLQSIRLIAELLSRAKAVKLREQEQKEEKLRLQQQEERRRLQEAELRRVEEEKERALGLQRKERELRERLLSILLSKKPDDSHTHDELGVAHADLLQPVLDILQTVSSGCVSATTLHPLGGQPPAGAPKESPAHPEADGAPKSVNGSVAEEAPCKEVQSSCRVVPEDGSPEKRCPGGVLSCIPDNNQQPKGIPACEQNVSRKDTRSEQDKCNREPSKGRGRATGDGLADRHKRERSRARRASSREDGRPRKERRPHKKHAYKDDSPRRRSTSPDHTRSRRSHSKDRHRRERSRERRGSASRKHSRHRRRSERSRSRSPSRHRSTWNR</sequence>
<evidence type="ECO:0000256" key="1">
    <source>
        <dbReference type="SAM" id="MobiDB-lite"/>
    </source>
</evidence>
<evidence type="ECO:0000269" key="2">
    <source>
    </source>
</evidence>
<evidence type="ECO:0000269" key="3">
    <source>
    </source>
</evidence>
<evidence type="ECO:0000269" key="4">
    <source>
    </source>
</evidence>
<evidence type="ECO:0000269" key="5">
    <source>
    </source>
</evidence>
<evidence type="ECO:0000303" key="6">
    <source>
    </source>
</evidence>
<evidence type="ECO:0000305" key="7"/>
<evidence type="ECO:0000305" key="8">
    <source>
    </source>
</evidence>
<evidence type="ECO:0007744" key="9">
    <source>
    </source>
</evidence>
<evidence type="ECO:0007744" key="10">
    <source>
    </source>
</evidence>
<evidence type="ECO:0007744" key="11">
    <source>
    </source>
</evidence>
<evidence type="ECO:0007744" key="12">
    <source>
    </source>
</evidence>
<evidence type="ECO:0007744" key="13">
    <source>
    </source>
</evidence>
<evidence type="ECO:0007744" key="14">
    <source>
    </source>
</evidence>
<accession>Q02040</accession>
<accession>Q02832</accession>
<accession>Q2TB98</accession>
<accession>Q5JQ74</accession>
<accession>Q5JQ76</accession>
<accession>Q8N6U9</accession>